<reference key="1">
    <citation type="journal article" date="1990" name="J. Bacteriol.">
        <title>Sequence analysis of the inversion region containing the pilin genes of Moraxella bovis.</title>
        <authorList>
            <person name="Fulks K.A."/>
            <person name="Marrs C.F."/>
            <person name="Stevens S.P."/>
            <person name="Green M.R."/>
        </authorList>
    </citation>
    <scope>NUCLEOTIDE SEQUENCE [GENOMIC DNA]</scope>
    <source>
        <strain>EPP63</strain>
    </source>
</reference>
<reference key="2">
    <citation type="journal article" date="1988" name="J. Exp. Med.">
        <title>Purification, characterization, and pathogenicity of Moraxella bovis pili.</title>
        <authorList>
            <person name="Ruehl W.W."/>
            <person name="Marrs C.F."/>
            <person name="Fernandez R."/>
            <person name="Falkow S."/>
            <person name="Schoolnik G.K."/>
        </authorList>
    </citation>
    <scope>PROTEIN SEQUENCE OF 7-159</scope>
    <scope>METHYLATION AT PHE-7</scope>
    <scope>FUNCTION</scope>
    <scope>DISULFIDE BOND</scope>
</reference>
<sequence>MNAQKGFTLIELMIVIAIIGILAAIALPAYQDYISKSQTTRVSGELAAGKTAVDAALFEGKTPVLSEESSTSKENIGLTSSETSTKPRSNLMASVELTGFADNGAGTISATLGNKANKDIAKTVITQERTTDGVWTCKIDGSQAAKYKEKFNPTGCVKK</sequence>
<gene>
    <name type="primary">tfpI</name>
</gene>
<keyword id="KW-0903">Direct protein sequencing</keyword>
<keyword id="KW-1015">Disulfide bond</keyword>
<keyword id="KW-0281">Fimbrium</keyword>
<keyword id="KW-0472">Membrane</keyword>
<keyword id="KW-0488">Methylation</keyword>
<keyword id="KW-0812">Transmembrane</keyword>
<keyword id="KW-1133">Transmembrane helix</keyword>
<name>FMI_MORBO</name>
<accession>P20657</accession>
<feature type="propeptide" id="PRO_0000024150" description="Leader sequence" evidence="2 4">
    <location>
        <begin position="1"/>
        <end position="6"/>
    </location>
</feature>
<feature type="chain" id="PRO_0000024151" description="Type IV major alpha-pilin">
    <location>
        <begin position="7"/>
        <end position="159"/>
    </location>
</feature>
<feature type="transmembrane region" description="Helical" evidence="1">
    <location>
        <begin position="7"/>
        <end position="27"/>
    </location>
</feature>
<feature type="region of interest" description="Disordered" evidence="3">
    <location>
        <begin position="64"/>
        <end position="87"/>
    </location>
</feature>
<feature type="compositionally biased region" description="Polar residues" evidence="3">
    <location>
        <begin position="67"/>
        <end position="87"/>
    </location>
</feature>
<feature type="modified residue" description="N-methylphenylalanine" evidence="2 4">
    <location>
        <position position="7"/>
    </location>
</feature>
<feature type="disulfide bond" evidence="4">
    <location>
        <begin position="137"/>
        <end position="156"/>
    </location>
</feature>
<feature type="sequence conflict" description="In Ref. 2; AA sequence." evidence="5" ref="2">
    <original>K</original>
    <variation>KSK</variation>
    <location>
        <position position="159"/>
    </location>
</feature>
<protein>
    <recommendedName>
        <fullName>Type IV major alpha-pilin</fullName>
    </recommendedName>
    <alternativeName>
        <fullName>Alpha-pilin</fullName>
    </alternativeName>
    <alternativeName>
        <fullName>Fimbrial protein I</fullName>
    </alternativeName>
    <alternativeName>
        <fullName>I pilin</fullName>
    </alternativeName>
</protein>
<dbReference type="EMBL" id="M32345">
    <property type="status" value="NOT_ANNOTATED_CDS"/>
    <property type="molecule type" value="Genomic_DNA"/>
</dbReference>
<dbReference type="PIR" id="JL0071">
    <property type="entry name" value="JL0071"/>
</dbReference>
<dbReference type="RefSeq" id="WP_112741866.1">
    <property type="nucleotide sequence ID" value="NZ_CP030241.1"/>
</dbReference>
<dbReference type="SMR" id="P20657"/>
<dbReference type="iPTMnet" id="P20657"/>
<dbReference type="KEGG" id="mboi:DQF64_03160"/>
<dbReference type="GO" id="GO:0016020">
    <property type="term" value="C:membrane"/>
    <property type="evidence" value="ECO:0007669"/>
    <property type="project" value="UniProtKB-SubCell"/>
</dbReference>
<dbReference type="GO" id="GO:0044096">
    <property type="term" value="C:type IV pilus"/>
    <property type="evidence" value="ECO:0007669"/>
    <property type="project" value="TreeGrafter"/>
</dbReference>
<dbReference type="GO" id="GO:0007155">
    <property type="term" value="P:cell adhesion"/>
    <property type="evidence" value="ECO:0007669"/>
    <property type="project" value="InterPro"/>
</dbReference>
<dbReference type="GO" id="GO:0043107">
    <property type="term" value="P:type IV pilus-dependent motility"/>
    <property type="evidence" value="ECO:0007669"/>
    <property type="project" value="TreeGrafter"/>
</dbReference>
<dbReference type="Gene3D" id="3.30.700.10">
    <property type="entry name" value="Glycoprotein, Type 4 Pilin"/>
    <property type="match status" value="1"/>
</dbReference>
<dbReference type="InterPro" id="IPR012902">
    <property type="entry name" value="N_methyl_site"/>
</dbReference>
<dbReference type="InterPro" id="IPR001082">
    <property type="entry name" value="Pilin"/>
</dbReference>
<dbReference type="InterPro" id="IPR045584">
    <property type="entry name" value="Pilin-like"/>
</dbReference>
<dbReference type="InterPro" id="IPR050470">
    <property type="entry name" value="T4P/T2SS_Core"/>
</dbReference>
<dbReference type="NCBIfam" id="TIGR02532">
    <property type="entry name" value="IV_pilin_GFxxxE"/>
    <property type="match status" value="1"/>
</dbReference>
<dbReference type="PANTHER" id="PTHR30093">
    <property type="entry name" value="GENERAL SECRETION PATHWAY PROTEIN G"/>
    <property type="match status" value="1"/>
</dbReference>
<dbReference type="PANTHER" id="PTHR30093:SF34">
    <property type="entry name" value="PREPILIN PEPTIDASE-DEPENDENT PROTEIN D"/>
    <property type="match status" value="1"/>
</dbReference>
<dbReference type="Pfam" id="PF07963">
    <property type="entry name" value="N_methyl"/>
    <property type="match status" value="1"/>
</dbReference>
<dbReference type="Pfam" id="PF00114">
    <property type="entry name" value="Pilin"/>
    <property type="match status" value="1"/>
</dbReference>
<dbReference type="SUPFAM" id="SSF54523">
    <property type="entry name" value="Pili subunits"/>
    <property type="match status" value="1"/>
</dbReference>
<dbReference type="PROSITE" id="PS00409">
    <property type="entry name" value="PROKAR_NTER_METHYL"/>
    <property type="match status" value="1"/>
</dbReference>
<organism>
    <name type="scientific">Moraxella bovis</name>
    <dbReference type="NCBI Taxonomy" id="476"/>
    <lineage>
        <taxon>Bacteria</taxon>
        <taxon>Pseudomonadati</taxon>
        <taxon>Pseudomonadota</taxon>
        <taxon>Gammaproteobacteria</taxon>
        <taxon>Moraxellales</taxon>
        <taxon>Moraxellaceae</taxon>
        <taxon>Moraxella</taxon>
    </lineage>
</organism>
<evidence type="ECO:0000255" key="1"/>
<evidence type="ECO:0000255" key="2">
    <source>
        <dbReference type="PROSITE-ProRule" id="PRU01070"/>
    </source>
</evidence>
<evidence type="ECO:0000256" key="3">
    <source>
        <dbReference type="SAM" id="MobiDB-lite"/>
    </source>
</evidence>
<evidence type="ECO:0000269" key="4">
    <source>
    </source>
</evidence>
<evidence type="ECO:0000305" key="5"/>
<proteinExistence type="evidence at protein level"/>
<comment type="subunit">
    <text evidence="4">Major component of the type IV pilus (T4P) that plays a role in surface and attachment to the host epithelial tissues.</text>
</comment>
<comment type="subcellular location">
    <subcellularLocation>
        <location>Fimbrium</location>
    </subcellularLocation>
    <subcellularLocation>
        <location evidence="1">Membrane</location>
        <topology evidence="1">Single-pass membrane protein</topology>
    </subcellularLocation>
</comment>
<comment type="miscellaneous">
    <text>Moraxella bovis can express either a Q or a I pilin, the inversion of 2 kb of DNA determines which pilin is expressed.</text>
</comment>
<comment type="similarity">
    <text evidence="5">Belongs to the N-Me-Phe pilin family.</text>
</comment>